<comment type="catalytic activity">
    <reaction evidence="1">
        <text>L-glutamine + H2O = L-glutamate + NH4(+)</text>
        <dbReference type="Rhea" id="RHEA:15889"/>
        <dbReference type="ChEBI" id="CHEBI:15377"/>
        <dbReference type="ChEBI" id="CHEBI:28938"/>
        <dbReference type="ChEBI" id="CHEBI:29985"/>
        <dbReference type="ChEBI" id="CHEBI:58359"/>
        <dbReference type="EC" id="3.5.1.2"/>
    </reaction>
</comment>
<comment type="subunit">
    <text evidence="1">Homotetramer.</text>
</comment>
<comment type="similarity">
    <text evidence="1">Belongs to the glutaminase family.</text>
</comment>
<dbReference type="EC" id="3.5.1.2" evidence="1"/>
<dbReference type="EMBL" id="CP001034">
    <property type="protein sequence ID" value="ACB83897.1"/>
    <property type="molecule type" value="Genomic_DNA"/>
</dbReference>
<dbReference type="RefSeq" id="WP_012446785.1">
    <property type="nucleotide sequence ID" value="NC_010718.1"/>
</dbReference>
<dbReference type="SMR" id="B2A4X5"/>
<dbReference type="FunCoup" id="B2A4X5">
    <property type="interactions" value="79"/>
</dbReference>
<dbReference type="STRING" id="457570.Nther_0299"/>
<dbReference type="KEGG" id="nth:Nther_0299"/>
<dbReference type="eggNOG" id="COG2066">
    <property type="taxonomic scope" value="Bacteria"/>
</dbReference>
<dbReference type="HOGENOM" id="CLU_027932_1_0_9"/>
<dbReference type="InParanoid" id="B2A4X5"/>
<dbReference type="OrthoDB" id="9788822at2"/>
<dbReference type="Proteomes" id="UP000001683">
    <property type="component" value="Chromosome"/>
</dbReference>
<dbReference type="GO" id="GO:0004359">
    <property type="term" value="F:glutaminase activity"/>
    <property type="evidence" value="ECO:0007669"/>
    <property type="project" value="UniProtKB-UniRule"/>
</dbReference>
<dbReference type="GO" id="GO:0006537">
    <property type="term" value="P:glutamate biosynthetic process"/>
    <property type="evidence" value="ECO:0007669"/>
    <property type="project" value="TreeGrafter"/>
</dbReference>
<dbReference type="GO" id="GO:0006543">
    <property type="term" value="P:glutamine catabolic process"/>
    <property type="evidence" value="ECO:0007669"/>
    <property type="project" value="TreeGrafter"/>
</dbReference>
<dbReference type="FunFam" id="3.40.710.10:FF:000005">
    <property type="entry name" value="Glutaminase"/>
    <property type="match status" value="1"/>
</dbReference>
<dbReference type="Gene3D" id="3.40.710.10">
    <property type="entry name" value="DD-peptidase/beta-lactamase superfamily"/>
    <property type="match status" value="1"/>
</dbReference>
<dbReference type="HAMAP" id="MF_00313">
    <property type="entry name" value="Glutaminase"/>
    <property type="match status" value="1"/>
</dbReference>
<dbReference type="InterPro" id="IPR012338">
    <property type="entry name" value="Beta-lactam/transpept-like"/>
</dbReference>
<dbReference type="InterPro" id="IPR015868">
    <property type="entry name" value="Glutaminase"/>
</dbReference>
<dbReference type="NCBIfam" id="TIGR03814">
    <property type="entry name" value="Gln_ase"/>
    <property type="match status" value="1"/>
</dbReference>
<dbReference type="PANTHER" id="PTHR12544">
    <property type="entry name" value="GLUTAMINASE"/>
    <property type="match status" value="1"/>
</dbReference>
<dbReference type="PANTHER" id="PTHR12544:SF29">
    <property type="entry name" value="GLUTAMINASE"/>
    <property type="match status" value="1"/>
</dbReference>
<dbReference type="Pfam" id="PF04960">
    <property type="entry name" value="Glutaminase"/>
    <property type="match status" value="1"/>
</dbReference>
<dbReference type="SUPFAM" id="SSF56601">
    <property type="entry name" value="beta-lactamase/transpeptidase-like"/>
    <property type="match status" value="1"/>
</dbReference>
<reference key="1">
    <citation type="submission" date="2008-04" db="EMBL/GenBank/DDBJ databases">
        <title>Complete sequence of chromosome of Natranaerobius thermophilus JW/NM-WN-LF.</title>
        <authorList>
            <consortium name="US DOE Joint Genome Institute"/>
            <person name="Copeland A."/>
            <person name="Lucas S."/>
            <person name="Lapidus A."/>
            <person name="Glavina del Rio T."/>
            <person name="Dalin E."/>
            <person name="Tice H."/>
            <person name="Bruce D."/>
            <person name="Goodwin L."/>
            <person name="Pitluck S."/>
            <person name="Chertkov O."/>
            <person name="Brettin T."/>
            <person name="Detter J.C."/>
            <person name="Han C."/>
            <person name="Kuske C.R."/>
            <person name="Schmutz J."/>
            <person name="Larimer F."/>
            <person name="Land M."/>
            <person name="Hauser L."/>
            <person name="Kyrpides N."/>
            <person name="Lykidis A."/>
            <person name="Mesbah N.M."/>
            <person name="Wiegel J."/>
        </authorList>
    </citation>
    <scope>NUCLEOTIDE SEQUENCE [LARGE SCALE GENOMIC DNA]</scope>
    <source>
        <strain>ATCC BAA-1301 / DSM 18059 / JW/NM-WN-LF</strain>
    </source>
</reference>
<sequence>MINNVNQEILRAFVENNRPLAHDGRLPTYIPALMNANKQDFGIHITELDGNSHYYGSFQIPFTVQSISKIITLAMAIMDNGEELVFSRVGMEPTEDKFNSILPLEMSSAYPPNPMINAGAIVVTSLIKGRTAGEQFERILDFTRALADNKNIQVDENAFLSERETGNMNRSLAYYLKDANVINGNVEEILETYFRHCSILVTAEDLSRIAYIFANDGKDIEGKQLIPAKVCKIVRAIMAMSGFYDESGEFAVRVGIPAKSGVGGGIIGVVPGYMGIGLYGPALNNKGTSIVGFNVLEELTSYLQVGIY</sequence>
<protein>
    <recommendedName>
        <fullName evidence="1">Glutaminase</fullName>
        <ecNumber evidence="1">3.5.1.2</ecNumber>
    </recommendedName>
</protein>
<gene>
    <name evidence="1" type="primary">glsA</name>
    <name type="ordered locus">Nther_0299</name>
</gene>
<name>GLSA_NATTJ</name>
<evidence type="ECO:0000255" key="1">
    <source>
        <dbReference type="HAMAP-Rule" id="MF_00313"/>
    </source>
</evidence>
<feature type="chain" id="PRO_1000132909" description="Glutaminase">
    <location>
        <begin position="1"/>
        <end position="308"/>
    </location>
</feature>
<feature type="binding site" evidence="1">
    <location>
        <position position="66"/>
    </location>
    <ligand>
        <name>substrate</name>
    </ligand>
</feature>
<feature type="binding site" evidence="1">
    <location>
        <position position="117"/>
    </location>
    <ligand>
        <name>substrate</name>
    </ligand>
</feature>
<feature type="binding site" evidence="1">
    <location>
        <position position="162"/>
    </location>
    <ligand>
        <name>substrate</name>
    </ligand>
</feature>
<feature type="binding site" evidence="1">
    <location>
        <position position="169"/>
    </location>
    <ligand>
        <name>substrate</name>
    </ligand>
</feature>
<feature type="binding site" evidence="1">
    <location>
        <position position="193"/>
    </location>
    <ligand>
        <name>substrate</name>
    </ligand>
</feature>
<feature type="binding site" evidence="1">
    <location>
        <position position="244"/>
    </location>
    <ligand>
        <name>substrate</name>
    </ligand>
</feature>
<feature type="binding site" evidence="1">
    <location>
        <position position="262"/>
    </location>
    <ligand>
        <name>substrate</name>
    </ligand>
</feature>
<proteinExistence type="inferred from homology"/>
<organism>
    <name type="scientific">Natranaerobius thermophilus (strain ATCC BAA-1301 / DSM 18059 / JW/NM-WN-LF)</name>
    <dbReference type="NCBI Taxonomy" id="457570"/>
    <lineage>
        <taxon>Bacteria</taxon>
        <taxon>Bacillati</taxon>
        <taxon>Bacillota</taxon>
        <taxon>Clostridia</taxon>
        <taxon>Natranaerobiales</taxon>
        <taxon>Natranaerobiaceae</taxon>
        <taxon>Natranaerobius</taxon>
    </lineage>
</organism>
<accession>B2A4X5</accession>
<keyword id="KW-0378">Hydrolase</keyword>
<keyword id="KW-1185">Reference proteome</keyword>